<feature type="chain" id="PRO_0000461850" description="Xylosidase/arabinosidase 43B">
    <location>
        <begin position="1"/>
        <end position="538"/>
    </location>
</feature>
<feature type="active site" description="Proton donor" evidence="1">
    <location>
        <position position="367"/>
    </location>
</feature>
<protein>
    <recommendedName>
        <fullName evidence="3">Xylosidase/arabinosidase 43B</fullName>
    </recommendedName>
    <domain>
        <recommendedName>
            <fullName evidence="3">Beta-xylosidase</fullName>
            <ecNumber evidence="2">3.2.1.37</ecNumber>
        </recommendedName>
        <alternativeName>
            <fullName evidence="3">1,4-beta-D-xylan xylohydrolase</fullName>
        </alternativeName>
        <alternativeName>
            <fullName evidence="3">Xylan 1,4-beta-xylosidase</fullName>
        </alternativeName>
    </domain>
    <domain>
        <recommendedName>
            <fullName evidence="3">Alpha-L-arabinofuranosidase</fullName>
            <shortName evidence="3">Arabinosidase</shortName>
            <ecNumber evidence="2">3.2.1.55</ecNumber>
        </recommendedName>
    </domain>
</protein>
<dbReference type="EC" id="3.2.1.37" evidence="2"/>
<dbReference type="EC" id="3.2.1.55" evidence="2"/>
<dbReference type="EMBL" id="KC962401">
    <property type="protein sequence ID" value="AHC72383.1"/>
    <property type="molecule type" value="mRNA"/>
</dbReference>
<dbReference type="GO" id="GO:0009044">
    <property type="term" value="F:xylan 1,4-beta-xylosidase activity"/>
    <property type="evidence" value="ECO:0007669"/>
    <property type="project" value="UniProtKB-EC"/>
</dbReference>
<dbReference type="GO" id="GO:0005975">
    <property type="term" value="P:carbohydrate metabolic process"/>
    <property type="evidence" value="ECO:0007669"/>
    <property type="project" value="InterPro"/>
</dbReference>
<dbReference type="CDD" id="cd09000">
    <property type="entry name" value="GH43_SXA-like"/>
    <property type="match status" value="1"/>
</dbReference>
<dbReference type="Gene3D" id="2.60.120.200">
    <property type="match status" value="1"/>
</dbReference>
<dbReference type="Gene3D" id="2.115.10.20">
    <property type="entry name" value="Glycosyl hydrolase domain, family 43"/>
    <property type="match status" value="1"/>
</dbReference>
<dbReference type="InterPro" id="IPR013320">
    <property type="entry name" value="ConA-like_dom_sf"/>
</dbReference>
<dbReference type="InterPro" id="IPR041542">
    <property type="entry name" value="GH43_C2"/>
</dbReference>
<dbReference type="InterPro" id="IPR006710">
    <property type="entry name" value="Glyco_hydro_43"/>
</dbReference>
<dbReference type="InterPro" id="IPR023296">
    <property type="entry name" value="Glyco_hydro_beta-prop_sf"/>
</dbReference>
<dbReference type="InterPro" id="IPR051795">
    <property type="entry name" value="Glycosyl_Hydrlase_43"/>
</dbReference>
<dbReference type="PANTHER" id="PTHR42812">
    <property type="entry name" value="BETA-XYLOSIDASE"/>
    <property type="match status" value="1"/>
</dbReference>
<dbReference type="PANTHER" id="PTHR42812:SF12">
    <property type="entry name" value="BETA-XYLOSIDASE-RELATED"/>
    <property type="match status" value="1"/>
</dbReference>
<dbReference type="Pfam" id="PF17851">
    <property type="entry name" value="GH43_C2"/>
    <property type="match status" value="1"/>
</dbReference>
<dbReference type="Pfam" id="PF04616">
    <property type="entry name" value="Glyco_hydro_43"/>
    <property type="match status" value="1"/>
</dbReference>
<dbReference type="SUPFAM" id="SSF75005">
    <property type="entry name" value="Arabinanase/levansucrase/invertase"/>
    <property type="match status" value="1"/>
</dbReference>
<dbReference type="SUPFAM" id="SSF49899">
    <property type="entry name" value="Concanavalin A-like lectins/glucanases"/>
    <property type="match status" value="1"/>
</dbReference>
<gene>
    <name evidence="3" type="primary">Xyl43B</name>
</gene>
<organism>
    <name type="scientific">Humicola insolens</name>
    <name type="common">Soft-rot fungus</name>
    <dbReference type="NCBI Taxonomy" id="85995"/>
    <lineage>
        <taxon>Eukaryota</taxon>
        <taxon>Fungi</taxon>
        <taxon>Dikarya</taxon>
        <taxon>Ascomycota</taxon>
        <taxon>Pezizomycotina</taxon>
        <taxon>Sordariomycetes</taxon>
        <taxon>Sordariomycetidae</taxon>
        <taxon>Sordariales</taxon>
        <taxon>Chaetomiaceae</taxon>
        <taxon>Mycothermus</taxon>
    </lineage>
</organism>
<sequence length="538" mass="61724">MPQVRNPILPGFNPDPSILRVGEDYYIATSTFEWYPGVQIHHSRDLANWELVARPLNRKSQLDMRGNPDSCGIWAPCLSHDGERFWLVYTDVKRKDGSFKDTPNYIVTAEKIEGPWSDPIYINSSGFDPSLFHDDDGRKWFVNMLWDHRRRPQLFEGIVLQEFDPKAGKLVGPRKNIFTGTDLALVEGPHLYKRNGWYYLLTAEGGTGYEHACTFARSRNIWGPYEVHPQKYILTSKDHPHAALQRAGHGDIVDTPDGRTYLVHLTGRPTTQFRRCVLGRETAIQEAYWGDDDWLYVKNGPVPSLWVDLPAARDDTKYWEEKRYTFESGLHKDFQWLRTPETDRIFRTREDGKLTLIGRESIGSWFEQALVARRQTHFSCDAETVIDFSPEDQRQFAGLTAYYCRYNFFYLAVSAHSDGQRELFIMASEASWPLGELRYPVPEGVRIPNEGKVRLALTIRGRELQFYYALEGEELKKIGPVLDASIVSDECGGHQKHGSFTGAFVGVAASDLNGTAAEATFDYFIYRPVQHPSDRYEI</sequence>
<accession>V9TT49</accession>
<proteinExistence type="evidence at protein level"/>
<evidence type="ECO:0000250" key="1">
    <source>
        <dbReference type="UniProtKB" id="Q45071"/>
    </source>
</evidence>
<evidence type="ECO:0000269" key="2">
    <source>
    </source>
</evidence>
<evidence type="ECO:0000303" key="3">
    <source>
    </source>
</evidence>
<evidence type="ECO:0000305" key="4"/>
<reference key="1">
    <citation type="journal article" date="2014" name="Food Chem.">
        <title>Two xylose-tolerant GH43 bifunctional ?-xylosidase/?-arabinosidases and one GH11 xylanase from Humicola insolens and their synergy in the degradation of xylan.</title>
        <authorList>
            <person name="Yang X."/>
            <person name="Shi P."/>
            <person name="Huang H."/>
            <person name="Luo H."/>
            <person name="Wang Y."/>
            <person name="Zhang W."/>
            <person name="Yao B."/>
        </authorList>
    </citation>
    <scope>NUCLEOTIDE SEQUENCE [MRNA]</scope>
    <scope>FUNCTION</scope>
    <scope>CATALYTIC ACTIVITY</scope>
    <scope>BIOPHYSICOCHEMICAL PROPERTIES</scope>
    <scope>SUBSTRATE SPECIFICITY</scope>
    <scope>ACTIVITY REGULATION</scope>
    <scope>SUBCELLULAR LOCATION</scope>
    <scope>BIOTECHNOLOGY</scope>
    <source>
        <strain>Y1</strain>
    </source>
</reference>
<name>XY43B_HUMIN</name>
<keyword id="KW-0326">Glycosidase</keyword>
<keyword id="KW-0378">Hydrolase</keyword>
<comment type="function">
    <text evidence="2">Bifunctional beta-xylosidase/alpha-L-arabinosidases with a low level of xylanase activity (PubMed:24262572). Is most active on 4-nitrophenyl beta-D-xylopyranoside (pNPX) (defined as 100%), moderate on p-nitrophenyl-alpha-L-arabinofuranoside (pNPA) (56.6%), and weak on beechwood xylan (5.7%) and birchwood xylan (2.7%) (PubMed:24262572). Is able to attack xylooligosacchardies with degrees of polymerisation of 2-5, releasing the amounts of reducing sugars in the order of xylopentose &gt; xylotetraose &gt; xylotriose &gt; xylobiose, i.e. the rate of xylose released from xylooligosacchardies increased with the chain length (PubMed:24262572). No activity was detected in the presence of carboxymethyl cellulose-sodium (CMC-Na), sugar beet arabinan, AZCL-arabinan (debranched), 4-nitrophenyl a-D - galactopyranoside, 2-nitrophenyl beta-D-galactopyranoside, and 4-nitrophenyl alpha-D-glucopyranoside (PubMed:24262572).</text>
</comment>
<comment type="catalytic activity">
    <reaction evidence="2">
        <text>Hydrolysis of (1-&gt;4)-beta-D-xylans, to remove successive D-xylose residues from the non-reducing termini.</text>
        <dbReference type="EC" id="3.2.1.37"/>
    </reaction>
</comment>
<comment type="catalytic activity">
    <reaction evidence="2">
        <text>Hydrolysis of terminal non-reducing alpha-L-arabinofuranoside residues in alpha-L-arabinosides.</text>
        <dbReference type="EC" id="3.2.1.55"/>
    </reaction>
</comment>
<comment type="activity regulation">
    <text evidence="2">Activity is inhibited by Ag(+), Li(+), Cu(2+), Cr(3+), Co(3+), Ni(2+), Mg(2+), Zn(2+), EDTA, SDS and beta-mercaptoethanol; but not by Mn(2+), Pb(2+), Ca(2+) and Fe(3+).</text>
</comment>
<comment type="biophysicochemical properties">
    <kinetics>
        <KM evidence="3">1.29 mM for pNPX</KM>
        <Vmax evidence="2">2.18 umol/min/mg enzyme towards pNPX</Vmax>
    </kinetics>
    <phDependence>
        <text evidence="2">Optimum pH is 7.0.</text>
    </phDependence>
    <temperatureDependence>
        <text evidence="2">Optimum temperature is 50 degrees Celsius.</text>
    </temperatureDependence>
</comment>
<comment type="biotechnology">
    <text evidence="2">Combining xylanase Xyn11A and xylosidases Xyl43A and/or Xyl43B leads to the release of reducing sugars as high as 1.29 folds of the sum of that released by each enzyme, which contributes to the formulation of optimised enzyme mixtures for the efficient hydrolysis of plant biomass.</text>
</comment>
<comment type="similarity">
    <text evidence="4">Belongs to the glycosyl hydrolase 43 family.</text>
</comment>